<sequence length="415" mass="47568">MSLQAPKGTKDLLPTESYKWQYLENKFRNIAADFGCREIRTPVFEYTELFQRGVGETTDVVQKEMYTFEDKAGRSITLKPEGTSPAVRAFVEGRLFNETQPTKMYYFTPVMRYENVQKGRLRQHHQFGIEIFGAKEASVDAEVISIPVRIYKELGVEGVELNINSIGCPKCRKTYNEALKKYLSKNYDKLCSTCKTRFDKNPLRILDCKVDTCKEIVKDAPIILDYICGECKEHFESLKNYLDVLNINYKIDPFIVRGLDYYSKTVFEFITDDITICAGGRYDYLIEEIGGPSMPAVGFGMGMERLLLTLQEKAIEIPEEAYVDLYLGNMGDKAKLEVLKLAKELRDRHIKCEIDHMGKSVKAQMKYANRIGAKYSMVLGEEELNTGKATIKKMEDGQQIEVDIKDIDTLIKVFK</sequence>
<organism>
    <name type="scientific">Clostridium botulinum (strain 657 / Type Ba4)</name>
    <dbReference type="NCBI Taxonomy" id="515621"/>
    <lineage>
        <taxon>Bacteria</taxon>
        <taxon>Bacillati</taxon>
        <taxon>Bacillota</taxon>
        <taxon>Clostridia</taxon>
        <taxon>Eubacteriales</taxon>
        <taxon>Clostridiaceae</taxon>
        <taxon>Clostridium</taxon>
    </lineage>
</organism>
<protein>
    <recommendedName>
        <fullName evidence="1">Histidine--tRNA ligase</fullName>
        <ecNumber evidence="1">6.1.1.21</ecNumber>
    </recommendedName>
    <alternativeName>
        <fullName evidence="1">Histidyl-tRNA synthetase</fullName>
        <shortName evidence="1">HisRS</shortName>
    </alternativeName>
</protein>
<keyword id="KW-0030">Aminoacyl-tRNA synthetase</keyword>
<keyword id="KW-0067">ATP-binding</keyword>
<keyword id="KW-0963">Cytoplasm</keyword>
<keyword id="KW-0436">Ligase</keyword>
<keyword id="KW-0547">Nucleotide-binding</keyword>
<keyword id="KW-0648">Protein biosynthesis</keyword>
<proteinExistence type="inferred from homology"/>
<accession>C3KTB7</accession>
<evidence type="ECO:0000255" key="1">
    <source>
        <dbReference type="HAMAP-Rule" id="MF_00127"/>
    </source>
</evidence>
<gene>
    <name evidence="1" type="primary">hisS</name>
    <name type="ordered locus">CLJ_B3320</name>
</gene>
<dbReference type="EC" id="6.1.1.21" evidence="1"/>
<dbReference type="EMBL" id="CP001083">
    <property type="protein sequence ID" value="ACQ52416.1"/>
    <property type="molecule type" value="Genomic_DNA"/>
</dbReference>
<dbReference type="RefSeq" id="WP_003360084.1">
    <property type="nucleotide sequence ID" value="NC_012658.1"/>
</dbReference>
<dbReference type="SMR" id="C3KTB7"/>
<dbReference type="KEGG" id="cbi:CLJ_B3320"/>
<dbReference type="HOGENOM" id="CLU_025113_1_1_9"/>
<dbReference type="Proteomes" id="UP000002333">
    <property type="component" value="Chromosome"/>
</dbReference>
<dbReference type="GO" id="GO:0005737">
    <property type="term" value="C:cytoplasm"/>
    <property type="evidence" value="ECO:0007669"/>
    <property type="project" value="UniProtKB-SubCell"/>
</dbReference>
<dbReference type="GO" id="GO:0005524">
    <property type="term" value="F:ATP binding"/>
    <property type="evidence" value="ECO:0007669"/>
    <property type="project" value="UniProtKB-UniRule"/>
</dbReference>
<dbReference type="GO" id="GO:0140096">
    <property type="term" value="F:catalytic activity, acting on a protein"/>
    <property type="evidence" value="ECO:0007669"/>
    <property type="project" value="UniProtKB-ARBA"/>
</dbReference>
<dbReference type="GO" id="GO:0004821">
    <property type="term" value="F:histidine-tRNA ligase activity"/>
    <property type="evidence" value="ECO:0007669"/>
    <property type="project" value="UniProtKB-UniRule"/>
</dbReference>
<dbReference type="GO" id="GO:0016740">
    <property type="term" value="F:transferase activity"/>
    <property type="evidence" value="ECO:0007669"/>
    <property type="project" value="UniProtKB-ARBA"/>
</dbReference>
<dbReference type="GO" id="GO:0006427">
    <property type="term" value="P:histidyl-tRNA aminoacylation"/>
    <property type="evidence" value="ECO:0007669"/>
    <property type="project" value="UniProtKB-UniRule"/>
</dbReference>
<dbReference type="CDD" id="cd00773">
    <property type="entry name" value="HisRS-like_core"/>
    <property type="match status" value="1"/>
</dbReference>
<dbReference type="CDD" id="cd00859">
    <property type="entry name" value="HisRS_anticodon"/>
    <property type="match status" value="1"/>
</dbReference>
<dbReference type="FunFam" id="3.30.930.10:FF:000005">
    <property type="entry name" value="Histidine--tRNA ligase"/>
    <property type="match status" value="1"/>
</dbReference>
<dbReference type="Gene3D" id="3.40.50.800">
    <property type="entry name" value="Anticodon-binding domain"/>
    <property type="match status" value="1"/>
</dbReference>
<dbReference type="Gene3D" id="3.30.930.10">
    <property type="entry name" value="Bira Bifunctional Protein, Domain 2"/>
    <property type="match status" value="1"/>
</dbReference>
<dbReference type="HAMAP" id="MF_00127">
    <property type="entry name" value="His_tRNA_synth"/>
    <property type="match status" value="1"/>
</dbReference>
<dbReference type="InterPro" id="IPR006195">
    <property type="entry name" value="aa-tRNA-synth_II"/>
</dbReference>
<dbReference type="InterPro" id="IPR045864">
    <property type="entry name" value="aa-tRNA-synth_II/BPL/LPL"/>
</dbReference>
<dbReference type="InterPro" id="IPR004154">
    <property type="entry name" value="Anticodon-bd"/>
</dbReference>
<dbReference type="InterPro" id="IPR036621">
    <property type="entry name" value="Anticodon-bd_dom_sf"/>
</dbReference>
<dbReference type="InterPro" id="IPR015807">
    <property type="entry name" value="His-tRNA-ligase"/>
</dbReference>
<dbReference type="InterPro" id="IPR041715">
    <property type="entry name" value="HisRS-like_core"/>
</dbReference>
<dbReference type="InterPro" id="IPR004516">
    <property type="entry name" value="HisRS/HisZ"/>
</dbReference>
<dbReference type="InterPro" id="IPR033656">
    <property type="entry name" value="HisRS_anticodon"/>
</dbReference>
<dbReference type="NCBIfam" id="TIGR00442">
    <property type="entry name" value="hisS"/>
    <property type="match status" value="1"/>
</dbReference>
<dbReference type="PANTHER" id="PTHR43707:SF1">
    <property type="entry name" value="HISTIDINE--TRNA LIGASE, MITOCHONDRIAL-RELATED"/>
    <property type="match status" value="1"/>
</dbReference>
<dbReference type="PANTHER" id="PTHR43707">
    <property type="entry name" value="HISTIDYL-TRNA SYNTHETASE"/>
    <property type="match status" value="1"/>
</dbReference>
<dbReference type="Pfam" id="PF03129">
    <property type="entry name" value="HGTP_anticodon"/>
    <property type="match status" value="1"/>
</dbReference>
<dbReference type="Pfam" id="PF13393">
    <property type="entry name" value="tRNA-synt_His"/>
    <property type="match status" value="1"/>
</dbReference>
<dbReference type="PIRSF" id="PIRSF001549">
    <property type="entry name" value="His-tRNA_synth"/>
    <property type="match status" value="1"/>
</dbReference>
<dbReference type="SUPFAM" id="SSF52954">
    <property type="entry name" value="Class II aaRS ABD-related"/>
    <property type="match status" value="1"/>
</dbReference>
<dbReference type="SUPFAM" id="SSF55681">
    <property type="entry name" value="Class II aaRS and biotin synthetases"/>
    <property type="match status" value="1"/>
</dbReference>
<dbReference type="PROSITE" id="PS50862">
    <property type="entry name" value="AA_TRNA_LIGASE_II"/>
    <property type="match status" value="1"/>
</dbReference>
<feature type="chain" id="PRO_1000203128" description="Histidine--tRNA ligase">
    <location>
        <begin position="1"/>
        <end position="415"/>
    </location>
</feature>
<comment type="catalytic activity">
    <reaction evidence="1">
        <text>tRNA(His) + L-histidine + ATP = L-histidyl-tRNA(His) + AMP + diphosphate + H(+)</text>
        <dbReference type="Rhea" id="RHEA:17313"/>
        <dbReference type="Rhea" id="RHEA-COMP:9665"/>
        <dbReference type="Rhea" id="RHEA-COMP:9689"/>
        <dbReference type="ChEBI" id="CHEBI:15378"/>
        <dbReference type="ChEBI" id="CHEBI:30616"/>
        <dbReference type="ChEBI" id="CHEBI:33019"/>
        <dbReference type="ChEBI" id="CHEBI:57595"/>
        <dbReference type="ChEBI" id="CHEBI:78442"/>
        <dbReference type="ChEBI" id="CHEBI:78527"/>
        <dbReference type="ChEBI" id="CHEBI:456215"/>
        <dbReference type="EC" id="6.1.1.21"/>
    </reaction>
</comment>
<comment type="subunit">
    <text evidence="1">Homodimer.</text>
</comment>
<comment type="subcellular location">
    <subcellularLocation>
        <location evidence="1">Cytoplasm</location>
    </subcellularLocation>
</comment>
<comment type="similarity">
    <text evidence="1">Belongs to the class-II aminoacyl-tRNA synthetase family.</text>
</comment>
<name>SYH_CLOB6</name>
<reference key="1">
    <citation type="submission" date="2008-05" db="EMBL/GenBank/DDBJ databases">
        <title>Genome sequence of Clostridium botulinum Ba4 strain 657.</title>
        <authorList>
            <person name="Shrivastava S."/>
            <person name="Brown J.L."/>
            <person name="Bruce D."/>
            <person name="Detter C."/>
            <person name="Munk C."/>
            <person name="Smith L.A."/>
            <person name="Smith T.J."/>
            <person name="Sutton G."/>
            <person name="Brettin T.S."/>
        </authorList>
    </citation>
    <scope>NUCLEOTIDE SEQUENCE [LARGE SCALE GENOMIC DNA]</scope>
    <source>
        <strain>657 / Type Ba4</strain>
    </source>
</reference>